<name>ENGB_LEGPH</name>
<organism>
    <name type="scientific">Legionella pneumophila subsp. pneumophila (strain Philadelphia 1 / ATCC 33152 / DSM 7513)</name>
    <dbReference type="NCBI Taxonomy" id="272624"/>
    <lineage>
        <taxon>Bacteria</taxon>
        <taxon>Pseudomonadati</taxon>
        <taxon>Pseudomonadota</taxon>
        <taxon>Gammaproteobacteria</taxon>
        <taxon>Legionellales</taxon>
        <taxon>Legionellaceae</taxon>
        <taxon>Legionella</taxon>
    </lineage>
</organism>
<proteinExistence type="inferred from homology"/>
<dbReference type="EMBL" id="AE017354">
    <property type="protein sequence ID" value="AAU26232.1"/>
    <property type="molecule type" value="Genomic_DNA"/>
</dbReference>
<dbReference type="RefSeq" id="YP_094179.1">
    <property type="nucleotide sequence ID" value="NC_002942.5"/>
</dbReference>
<dbReference type="SMR" id="Q5ZZ86"/>
<dbReference type="STRING" id="272624.lpg0125"/>
<dbReference type="PaxDb" id="272624-lpg0125"/>
<dbReference type="KEGG" id="lpn:lpg0125"/>
<dbReference type="PATRIC" id="fig|272624.6.peg.131"/>
<dbReference type="eggNOG" id="COG0218">
    <property type="taxonomic scope" value="Bacteria"/>
</dbReference>
<dbReference type="HOGENOM" id="CLU_033732_1_0_6"/>
<dbReference type="OrthoDB" id="9804921at2"/>
<dbReference type="Proteomes" id="UP000000609">
    <property type="component" value="Chromosome"/>
</dbReference>
<dbReference type="GO" id="GO:0005829">
    <property type="term" value="C:cytosol"/>
    <property type="evidence" value="ECO:0007669"/>
    <property type="project" value="TreeGrafter"/>
</dbReference>
<dbReference type="GO" id="GO:0005525">
    <property type="term" value="F:GTP binding"/>
    <property type="evidence" value="ECO:0007669"/>
    <property type="project" value="UniProtKB-UniRule"/>
</dbReference>
<dbReference type="GO" id="GO:0046872">
    <property type="term" value="F:metal ion binding"/>
    <property type="evidence" value="ECO:0007669"/>
    <property type="project" value="UniProtKB-KW"/>
</dbReference>
<dbReference type="GO" id="GO:0000917">
    <property type="term" value="P:division septum assembly"/>
    <property type="evidence" value="ECO:0007669"/>
    <property type="project" value="UniProtKB-KW"/>
</dbReference>
<dbReference type="CDD" id="cd01876">
    <property type="entry name" value="YihA_EngB"/>
    <property type="match status" value="1"/>
</dbReference>
<dbReference type="FunFam" id="3.40.50.300:FF:000098">
    <property type="entry name" value="Probable GTP-binding protein EngB"/>
    <property type="match status" value="1"/>
</dbReference>
<dbReference type="Gene3D" id="3.40.50.300">
    <property type="entry name" value="P-loop containing nucleotide triphosphate hydrolases"/>
    <property type="match status" value="1"/>
</dbReference>
<dbReference type="HAMAP" id="MF_00321">
    <property type="entry name" value="GTPase_EngB"/>
    <property type="match status" value="1"/>
</dbReference>
<dbReference type="InterPro" id="IPR030393">
    <property type="entry name" value="G_ENGB_dom"/>
</dbReference>
<dbReference type="InterPro" id="IPR006073">
    <property type="entry name" value="GTP-bd"/>
</dbReference>
<dbReference type="InterPro" id="IPR019987">
    <property type="entry name" value="GTP-bd_ribosome_bio_YsxC"/>
</dbReference>
<dbReference type="InterPro" id="IPR027417">
    <property type="entry name" value="P-loop_NTPase"/>
</dbReference>
<dbReference type="NCBIfam" id="TIGR03598">
    <property type="entry name" value="GTPase_YsxC"/>
    <property type="match status" value="1"/>
</dbReference>
<dbReference type="PANTHER" id="PTHR11649:SF13">
    <property type="entry name" value="ENGB-TYPE G DOMAIN-CONTAINING PROTEIN"/>
    <property type="match status" value="1"/>
</dbReference>
<dbReference type="PANTHER" id="PTHR11649">
    <property type="entry name" value="MSS1/TRME-RELATED GTP-BINDING PROTEIN"/>
    <property type="match status" value="1"/>
</dbReference>
<dbReference type="Pfam" id="PF01926">
    <property type="entry name" value="MMR_HSR1"/>
    <property type="match status" value="1"/>
</dbReference>
<dbReference type="SUPFAM" id="SSF52540">
    <property type="entry name" value="P-loop containing nucleoside triphosphate hydrolases"/>
    <property type="match status" value="1"/>
</dbReference>
<dbReference type="PROSITE" id="PS51706">
    <property type="entry name" value="G_ENGB"/>
    <property type="match status" value="1"/>
</dbReference>
<protein>
    <recommendedName>
        <fullName evidence="1">Probable GTP-binding protein EngB</fullName>
    </recommendedName>
</protein>
<feature type="chain" id="PRO_0000266886" description="Probable GTP-binding protein EngB">
    <location>
        <begin position="1"/>
        <end position="200"/>
    </location>
</feature>
<feature type="domain" description="EngB-type G" evidence="1">
    <location>
        <begin position="25"/>
        <end position="199"/>
    </location>
</feature>
<feature type="binding site" evidence="1">
    <location>
        <begin position="33"/>
        <end position="40"/>
    </location>
    <ligand>
        <name>GTP</name>
        <dbReference type="ChEBI" id="CHEBI:37565"/>
    </ligand>
</feature>
<feature type="binding site" evidence="1">
    <location>
        <position position="40"/>
    </location>
    <ligand>
        <name>Mg(2+)</name>
        <dbReference type="ChEBI" id="CHEBI:18420"/>
    </ligand>
</feature>
<feature type="binding site" evidence="1">
    <location>
        <begin position="60"/>
        <end position="64"/>
    </location>
    <ligand>
        <name>GTP</name>
        <dbReference type="ChEBI" id="CHEBI:37565"/>
    </ligand>
</feature>
<feature type="binding site" evidence="1">
    <location>
        <position position="62"/>
    </location>
    <ligand>
        <name>Mg(2+)</name>
        <dbReference type="ChEBI" id="CHEBI:18420"/>
    </ligand>
</feature>
<feature type="binding site" evidence="1">
    <location>
        <begin position="78"/>
        <end position="81"/>
    </location>
    <ligand>
        <name>GTP</name>
        <dbReference type="ChEBI" id="CHEBI:37565"/>
    </ligand>
</feature>
<feature type="binding site" evidence="1">
    <location>
        <begin position="145"/>
        <end position="148"/>
    </location>
    <ligand>
        <name>GTP</name>
        <dbReference type="ChEBI" id="CHEBI:37565"/>
    </ligand>
</feature>
<feature type="binding site" evidence="1">
    <location>
        <begin position="178"/>
        <end position="180"/>
    </location>
    <ligand>
        <name>GTP</name>
        <dbReference type="ChEBI" id="CHEBI:37565"/>
    </ligand>
</feature>
<sequence>MPINLYSKAVFLKSAARVNQLPEDSGYEVAFAGRSNAGKSSALNCLTNNKNLARTSKTPGRTQLINLFSLDEQRRLVDLPGYGYAKVAMEVKLEWQKNLAHYLEARQCLRGLILLMDVRHPLKDLDQILVNWALHRELPVHILLTKADKLSRSEVKNAVLKVRQYYELAEHLVSVQAFSSVKKDGVEELISLLDRWYEWN</sequence>
<gene>
    <name evidence="1" type="primary">engB</name>
    <name type="ordered locus">lpg0125</name>
</gene>
<evidence type="ECO:0000255" key="1">
    <source>
        <dbReference type="HAMAP-Rule" id="MF_00321"/>
    </source>
</evidence>
<keyword id="KW-0131">Cell cycle</keyword>
<keyword id="KW-0132">Cell division</keyword>
<keyword id="KW-0342">GTP-binding</keyword>
<keyword id="KW-0460">Magnesium</keyword>
<keyword id="KW-0479">Metal-binding</keyword>
<keyword id="KW-0547">Nucleotide-binding</keyword>
<keyword id="KW-1185">Reference proteome</keyword>
<keyword id="KW-0717">Septation</keyword>
<comment type="function">
    <text evidence="1">Necessary for normal cell division and for the maintenance of normal septation.</text>
</comment>
<comment type="cofactor">
    <cofactor evidence="1">
        <name>Mg(2+)</name>
        <dbReference type="ChEBI" id="CHEBI:18420"/>
    </cofactor>
</comment>
<comment type="similarity">
    <text evidence="1">Belongs to the TRAFAC class TrmE-Era-EngA-EngB-Septin-like GTPase superfamily. EngB GTPase family.</text>
</comment>
<reference key="1">
    <citation type="journal article" date="2004" name="Science">
        <title>The genomic sequence of the accidental pathogen Legionella pneumophila.</title>
        <authorList>
            <person name="Chien M."/>
            <person name="Morozova I."/>
            <person name="Shi S."/>
            <person name="Sheng H."/>
            <person name="Chen J."/>
            <person name="Gomez S.M."/>
            <person name="Asamani G."/>
            <person name="Hill K."/>
            <person name="Nuara J."/>
            <person name="Feder M."/>
            <person name="Rineer J."/>
            <person name="Greenberg J.J."/>
            <person name="Steshenko V."/>
            <person name="Park S.H."/>
            <person name="Zhao B."/>
            <person name="Teplitskaya E."/>
            <person name="Edwards J.R."/>
            <person name="Pampou S."/>
            <person name="Georghiou A."/>
            <person name="Chou I.-C."/>
            <person name="Iannuccilli W."/>
            <person name="Ulz M.E."/>
            <person name="Kim D.H."/>
            <person name="Geringer-Sameth A."/>
            <person name="Goldsberry C."/>
            <person name="Morozov P."/>
            <person name="Fischer S.G."/>
            <person name="Segal G."/>
            <person name="Qu X."/>
            <person name="Rzhetsky A."/>
            <person name="Zhang P."/>
            <person name="Cayanis E."/>
            <person name="De Jong P.J."/>
            <person name="Ju J."/>
            <person name="Kalachikov S."/>
            <person name="Shuman H.A."/>
            <person name="Russo J.J."/>
        </authorList>
    </citation>
    <scope>NUCLEOTIDE SEQUENCE [LARGE SCALE GENOMIC DNA]</scope>
    <source>
        <strain>Philadelphia 1 / ATCC 33152 / DSM 7513</strain>
    </source>
</reference>
<accession>Q5ZZ86</accession>